<sequence>MLINIRPGDAPLSTPIHPTAIIHPNAELHPSVQVAPYAVIGEQVKIGASTIIGPNVVIEGPTEIGVGNRIFAGAVIGTEPQDLKYRGAASQVKIGDHNQIREYVTINRATGENEVTQIGNNNLLMAYAHVAHNCVIEDEVIIANSVALAGHIYIESKARISGVLGVHQFVHIGRLAMVGGMARIERDVPPFTTVEGNPSRVRTLNLIGLKRAGVNEAEISEMKKAFRLIYRSNLTLKQALEQLESWSNNPYVQHLRDFLHQSTTVTGRRGPIPGKE</sequence>
<proteinExistence type="inferred from homology"/>
<comment type="function">
    <text evidence="1">Involved in the biosynthesis of lipid A, a phosphorylated glycolipid that anchors the lipopolysaccharide to the outer membrane of the cell.</text>
</comment>
<comment type="catalytic activity">
    <reaction evidence="1">
        <text>a (3R)-hydroxyacyl-[ACP] + UDP-N-acetyl-alpha-D-glucosamine = a UDP-3-O-[(3R)-3-hydroxyacyl]-N-acetyl-alpha-D-glucosamine + holo-[ACP]</text>
        <dbReference type="Rhea" id="RHEA:67812"/>
        <dbReference type="Rhea" id="RHEA-COMP:9685"/>
        <dbReference type="Rhea" id="RHEA-COMP:9945"/>
        <dbReference type="ChEBI" id="CHEBI:57705"/>
        <dbReference type="ChEBI" id="CHEBI:64479"/>
        <dbReference type="ChEBI" id="CHEBI:78827"/>
        <dbReference type="ChEBI" id="CHEBI:173225"/>
        <dbReference type="EC" id="2.3.1.129"/>
    </reaction>
</comment>
<comment type="pathway">
    <text evidence="1">Glycolipid biosynthesis; lipid IV(A) biosynthesis; lipid IV(A) from (3R)-3-hydroxytetradecanoyl-[acyl-carrier-protein] and UDP-N-acetyl-alpha-D-glucosamine: step 1/6.</text>
</comment>
<comment type="subunit">
    <text evidence="1">Homotrimer.</text>
</comment>
<comment type="subcellular location">
    <subcellularLocation>
        <location evidence="1">Cytoplasm</location>
    </subcellularLocation>
</comment>
<comment type="similarity">
    <text evidence="1">Belongs to the transferase hexapeptide repeat family. LpxA subfamily.</text>
</comment>
<name>LPXA_GLOC7</name>
<organism>
    <name type="scientific">Gloeothece citriformis (strain PCC 7424)</name>
    <name type="common">Cyanothece sp. (strain PCC 7424)</name>
    <dbReference type="NCBI Taxonomy" id="65393"/>
    <lineage>
        <taxon>Bacteria</taxon>
        <taxon>Bacillati</taxon>
        <taxon>Cyanobacteriota</taxon>
        <taxon>Cyanophyceae</taxon>
        <taxon>Oscillatoriophycideae</taxon>
        <taxon>Chroococcales</taxon>
        <taxon>Aphanothecaceae</taxon>
        <taxon>Gloeothece</taxon>
        <taxon>Gloeothece citriformis</taxon>
    </lineage>
</organism>
<feature type="chain" id="PRO_1000122698" description="Acyl-[acyl-carrier-protein]--UDP-N-acetylglucosamine O-acyltransferase">
    <location>
        <begin position="1"/>
        <end position="276"/>
    </location>
</feature>
<accession>B7KFS2</accession>
<reference key="1">
    <citation type="journal article" date="2011" name="MBio">
        <title>Novel metabolic attributes of the genus Cyanothece, comprising a group of unicellular nitrogen-fixing Cyanobacteria.</title>
        <authorList>
            <person name="Bandyopadhyay A."/>
            <person name="Elvitigala T."/>
            <person name="Welsh E."/>
            <person name="Stockel J."/>
            <person name="Liberton M."/>
            <person name="Min H."/>
            <person name="Sherman L.A."/>
            <person name="Pakrasi H.B."/>
        </authorList>
    </citation>
    <scope>NUCLEOTIDE SEQUENCE [LARGE SCALE GENOMIC DNA]</scope>
    <source>
        <strain>PCC 7424</strain>
    </source>
</reference>
<dbReference type="EC" id="2.3.1.129" evidence="1"/>
<dbReference type="EMBL" id="CP001291">
    <property type="protein sequence ID" value="ACK73397.1"/>
    <property type="molecule type" value="Genomic_DNA"/>
</dbReference>
<dbReference type="RefSeq" id="WP_015956977.1">
    <property type="nucleotide sequence ID" value="NC_011729.1"/>
</dbReference>
<dbReference type="SMR" id="B7KFS2"/>
<dbReference type="STRING" id="65393.PCC7424_5045"/>
<dbReference type="KEGG" id="cyc:PCC7424_5045"/>
<dbReference type="eggNOG" id="COG1043">
    <property type="taxonomic scope" value="Bacteria"/>
</dbReference>
<dbReference type="HOGENOM" id="CLU_061249_0_0_3"/>
<dbReference type="OrthoDB" id="9807278at2"/>
<dbReference type="UniPathway" id="UPA00359">
    <property type="reaction ID" value="UER00477"/>
</dbReference>
<dbReference type="Proteomes" id="UP000002384">
    <property type="component" value="Chromosome"/>
</dbReference>
<dbReference type="GO" id="GO:0031470">
    <property type="term" value="C:carboxysome"/>
    <property type="evidence" value="ECO:0007669"/>
    <property type="project" value="UniProtKB-ARBA"/>
</dbReference>
<dbReference type="GO" id="GO:0005737">
    <property type="term" value="C:cytoplasm"/>
    <property type="evidence" value="ECO:0007669"/>
    <property type="project" value="UniProtKB-SubCell"/>
</dbReference>
<dbReference type="GO" id="GO:0016020">
    <property type="term" value="C:membrane"/>
    <property type="evidence" value="ECO:0007669"/>
    <property type="project" value="GOC"/>
</dbReference>
<dbReference type="GO" id="GO:0008780">
    <property type="term" value="F:acyl-[acyl-carrier-protein]-UDP-N-acetylglucosamine O-acyltransferase activity"/>
    <property type="evidence" value="ECO:0007669"/>
    <property type="project" value="UniProtKB-UniRule"/>
</dbReference>
<dbReference type="GO" id="GO:0043886">
    <property type="term" value="F:structural constituent of carboxysome shell"/>
    <property type="evidence" value="ECO:0007669"/>
    <property type="project" value="UniProtKB-ARBA"/>
</dbReference>
<dbReference type="GO" id="GO:0009245">
    <property type="term" value="P:lipid A biosynthetic process"/>
    <property type="evidence" value="ECO:0007669"/>
    <property type="project" value="UniProtKB-UniRule"/>
</dbReference>
<dbReference type="CDD" id="cd03351">
    <property type="entry name" value="LbH_UDP-GlcNAc_AT"/>
    <property type="match status" value="1"/>
</dbReference>
<dbReference type="Gene3D" id="2.160.10.10">
    <property type="entry name" value="Hexapeptide repeat proteins"/>
    <property type="match status" value="1"/>
</dbReference>
<dbReference type="Gene3D" id="1.20.1180.10">
    <property type="entry name" value="Udp N-acetylglucosamine O-acyltransferase, C-terminal domain"/>
    <property type="match status" value="1"/>
</dbReference>
<dbReference type="HAMAP" id="MF_00387">
    <property type="entry name" value="LpxA"/>
    <property type="match status" value="1"/>
</dbReference>
<dbReference type="InterPro" id="IPR029098">
    <property type="entry name" value="Acetyltransf_C"/>
</dbReference>
<dbReference type="InterPro" id="IPR037157">
    <property type="entry name" value="Acetyltransf_C_sf"/>
</dbReference>
<dbReference type="InterPro" id="IPR001451">
    <property type="entry name" value="Hexapep"/>
</dbReference>
<dbReference type="InterPro" id="IPR010137">
    <property type="entry name" value="Lipid_A_LpxA"/>
</dbReference>
<dbReference type="InterPro" id="IPR011004">
    <property type="entry name" value="Trimer_LpxA-like_sf"/>
</dbReference>
<dbReference type="NCBIfam" id="TIGR01852">
    <property type="entry name" value="lipid_A_lpxA"/>
    <property type="match status" value="1"/>
</dbReference>
<dbReference type="NCBIfam" id="NF003657">
    <property type="entry name" value="PRK05289.1"/>
    <property type="match status" value="1"/>
</dbReference>
<dbReference type="PANTHER" id="PTHR43480">
    <property type="entry name" value="ACYL-[ACYL-CARRIER-PROTEIN]--UDP-N-ACETYLGLUCOSAMINE O-ACYLTRANSFERASE"/>
    <property type="match status" value="1"/>
</dbReference>
<dbReference type="PANTHER" id="PTHR43480:SF1">
    <property type="entry name" value="ACYL-[ACYL-CARRIER-PROTEIN]--UDP-N-ACETYLGLUCOSAMINE O-ACYLTRANSFERASE, MITOCHONDRIAL-RELATED"/>
    <property type="match status" value="1"/>
</dbReference>
<dbReference type="Pfam" id="PF13720">
    <property type="entry name" value="Acetyltransf_11"/>
    <property type="match status" value="1"/>
</dbReference>
<dbReference type="Pfam" id="PF00132">
    <property type="entry name" value="Hexapep"/>
    <property type="match status" value="1"/>
</dbReference>
<dbReference type="PIRSF" id="PIRSF000456">
    <property type="entry name" value="UDP-GlcNAc_acltr"/>
    <property type="match status" value="1"/>
</dbReference>
<dbReference type="SUPFAM" id="SSF51161">
    <property type="entry name" value="Trimeric LpxA-like enzymes"/>
    <property type="match status" value="1"/>
</dbReference>
<evidence type="ECO:0000255" key="1">
    <source>
        <dbReference type="HAMAP-Rule" id="MF_00387"/>
    </source>
</evidence>
<protein>
    <recommendedName>
        <fullName evidence="1">Acyl-[acyl-carrier-protein]--UDP-N-acetylglucosamine O-acyltransferase</fullName>
        <shortName evidence="1">UDP-N-acetylglucosamine acyltransferase</shortName>
        <ecNumber evidence="1">2.3.1.129</ecNumber>
    </recommendedName>
</protein>
<gene>
    <name evidence="1" type="primary">lpxA</name>
    <name type="ordered locus">PCC7424_5045</name>
</gene>
<keyword id="KW-0012">Acyltransferase</keyword>
<keyword id="KW-0963">Cytoplasm</keyword>
<keyword id="KW-0441">Lipid A biosynthesis</keyword>
<keyword id="KW-0444">Lipid biosynthesis</keyword>
<keyword id="KW-0443">Lipid metabolism</keyword>
<keyword id="KW-1185">Reference proteome</keyword>
<keyword id="KW-0677">Repeat</keyword>
<keyword id="KW-0808">Transferase</keyword>